<feature type="chain" id="PRO_0000422784" description="2-pyrone-4,6-dicarbaxylate hydrolase">
    <location>
        <begin position="1"/>
        <end position="305"/>
    </location>
</feature>
<feature type="active site" description="Proton acceptor" evidence="1">
    <location>
        <position position="258"/>
    </location>
</feature>
<feature type="binding site" evidence="1">
    <location>
        <begin position="32"/>
        <end position="34"/>
    </location>
    <ligand>
        <name>substrate</name>
    </ligand>
</feature>
<feature type="binding site" evidence="1">
    <location>
        <position position="50"/>
    </location>
    <ligand>
        <name>substrate</name>
    </ligand>
</feature>
<feature type="binding site" evidence="1">
    <location>
        <position position="78"/>
    </location>
    <ligand>
        <name>substrate</name>
    </ligand>
</feature>
<feature type="binding site" evidence="1">
    <location>
        <position position="125"/>
    </location>
    <ligand>
        <name>substrate</name>
    </ligand>
</feature>
<feature type="binding site" evidence="1">
    <location>
        <position position="131"/>
    </location>
    <ligand>
        <name>substrate</name>
    </ligand>
</feature>
<feature type="binding site" evidence="1">
    <location>
        <position position="158"/>
    </location>
    <ligand>
        <name>substrate</name>
    </ligand>
</feature>
<feature type="binding site" evidence="1">
    <location>
        <position position="182"/>
    </location>
    <ligand>
        <name>substrate</name>
    </ligand>
</feature>
<feature type="binding site" evidence="1">
    <location>
        <position position="263"/>
    </location>
    <ligand>
        <name>substrate</name>
    </ligand>
</feature>
<accession>Q93PS7</accession>
<organism>
    <name type="scientific">Comamonas testosteroni</name>
    <name type="common">Pseudomonas testosteroni</name>
    <dbReference type="NCBI Taxonomy" id="285"/>
    <lineage>
        <taxon>Bacteria</taxon>
        <taxon>Pseudomonadati</taxon>
        <taxon>Pseudomonadota</taxon>
        <taxon>Betaproteobacteria</taxon>
        <taxon>Burkholderiales</taxon>
        <taxon>Comamonadaceae</taxon>
        <taxon>Comamonas</taxon>
    </lineage>
</organism>
<gene>
    <name evidence="4" type="primary">pmdD</name>
</gene>
<comment type="function">
    <text evidence="2 3">Involved in the degradation of aromatic compounds via the protocatechuate 4,5-cleavage pathway (PubMed:11495993). Catalyzes the hydrolysis of 2-pyrone-4,6-dicarboxylate (PDC) to oxalomesaconate (OMA) (PubMed:7142106). Also catalyzes the reverse reaction (PubMed:7142106).</text>
</comment>
<comment type="catalytic activity">
    <reaction evidence="3">
        <text>2-oxo-2H-pyran-4,6-dicarboxylate + H2O = (1E)-4-oxobut-1-ene-1,2,4-tricarboxylate + H(+)</text>
        <dbReference type="Rhea" id="RHEA:10644"/>
        <dbReference type="ChEBI" id="CHEBI:15377"/>
        <dbReference type="ChEBI" id="CHEBI:15378"/>
        <dbReference type="ChEBI" id="CHEBI:57471"/>
        <dbReference type="ChEBI" id="CHEBI:58304"/>
        <dbReference type="EC" id="3.1.1.57"/>
    </reaction>
</comment>
<comment type="activity regulation">
    <text evidence="3">Strongly inhibited by 1 mM Zn(2+), Cu(2+), Mn(2+) and Co(2+) ions. Also inhibited by 5,5'-dithiobis(2-nitrobenzoic acid) (Ellman reagent) in vitro.</text>
</comment>
<comment type="biophysicochemical properties">
    <kinetics>
        <KM evidence="3">90 uM for 2-pyrone-4,6-dicarboxylate</KM>
    </kinetics>
    <phDependence>
        <text evidence="3">Optimum pH is 8.4-8.8 for the hydrolysis of 2-pyrone-4,6-dicarboxylate.</text>
    </phDependence>
</comment>
<comment type="induction">
    <text evidence="3">Induced by 4-hydroxybenzoate.</text>
</comment>
<comment type="disruption phenotype">
    <text evidence="2">Disruption of this gene results in a strain unable to grow on protocatechuate and a variety of aromatic substrates funnelled through this compound (m- and p-hydroxybenzoate, p-sulfobenzoate, phthalate, isophthalate, terephthalate, vanillate, isovanillate and veratrate). Growth on benzoate and o-aminobenzoate (anthranilate) is not affected in the mutant strain, indicating that these substrates are metabolized via a different lower pathway.</text>
</comment>
<comment type="similarity">
    <text evidence="6">Belongs to the metallo-dependent hydrolases superfamily. PDC hydrolase family.</text>
</comment>
<protein>
    <recommendedName>
        <fullName evidence="4 5">2-pyrone-4,6-dicarbaxylate hydrolase</fullName>
        <shortName evidence="5">PDC hydrolase</shortName>
        <ecNumber evidence="3">3.1.1.57</ecNumber>
    </recommendedName>
    <alternativeName>
        <fullName>2-pyrone-4,6-dicarboxylate lactonase</fullName>
    </alternativeName>
</protein>
<keyword id="KW-0058">Aromatic hydrocarbons catabolism</keyword>
<keyword id="KW-0378">Hydrolase</keyword>
<evidence type="ECO:0000250" key="1">
    <source>
        <dbReference type="UniProtKB" id="O87170"/>
    </source>
</evidence>
<evidence type="ECO:0000269" key="2">
    <source>
    </source>
</evidence>
<evidence type="ECO:0000269" key="3">
    <source>
    </source>
</evidence>
<evidence type="ECO:0000303" key="4">
    <source>
    </source>
</evidence>
<evidence type="ECO:0000303" key="5">
    <source>
    </source>
</evidence>
<evidence type="ECO:0000305" key="6"/>
<name>LIGI_COMTE</name>
<sequence>MSQFEKTPGWLDWYANPSKPQFKLPAGAVDAHCHVFGPGNEFPFAPERKYTPCDASKAQLYALRDHLGFARNVVVQATCHGADNRAMVDACKSSGGKARGVATVKRSISDAELQQLHDAGVRGVRFNFVKRLVDFTPKDELMEIAGRIAKLGWHVVIYFEAVDLPELWDFFTALPTTVVVDHMGRPDVTKGVDSEEFALFLKFMREHQNVWSKVSCPERLSVTGPKALNGEQNAYRDVVPFARRVVEEFPDRVLWGTDWPHPNLKDHMPDDGLLVDFIPHIAPTAELQQKLLVDNPMRLYWPEEV</sequence>
<dbReference type="EC" id="3.1.1.57" evidence="3"/>
<dbReference type="EMBL" id="AF305325">
    <property type="protein sequence ID" value="AAK73571.1"/>
    <property type="molecule type" value="Genomic_DNA"/>
</dbReference>
<dbReference type="SMR" id="Q93PS7"/>
<dbReference type="BioCyc" id="MetaCyc:MONOMER-3463"/>
<dbReference type="GO" id="GO:0047554">
    <property type="term" value="F:2-pyrone-4,6-dicarboxylate lactonase activity"/>
    <property type="evidence" value="ECO:0000315"/>
    <property type="project" value="UniProtKB"/>
</dbReference>
<dbReference type="GO" id="GO:0019619">
    <property type="term" value="P:3,4-dihydroxybenzoate catabolic process"/>
    <property type="evidence" value="ECO:0000315"/>
    <property type="project" value="UniProtKB"/>
</dbReference>
<dbReference type="CDD" id="cd01311">
    <property type="entry name" value="PDC_hydrolase"/>
    <property type="match status" value="1"/>
</dbReference>
<dbReference type="FunFam" id="3.20.20.140:FF:000100">
    <property type="entry name" value="2-pyrone-4,6-dicarboxylate hydrolase"/>
    <property type="match status" value="1"/>
</dbReference>
<dbReference type="Gene3D" id="3.20.20.140">
    <property type="entry name" value="Metal-dependent hydrolases"/>
    <property type="match status" value="1"/>
</dbReference>
<dbReference type="InterPro" id="IPR006680">
    <property type="entry name" value="Amidohydro-rel"/>
</dbReference>
<dbReference type="InterPro" id="IPR052358">
    <property type="entry name" value="Aro_Compnd_Degr_Hydrolases"/>
</dbReference>
<dbReference type="InterPro" id="IPR047874">
    <property type="entry name" value="GLI/LigI"/>
</dbReference>
<dbReference type="InterPro" id="IPR032466">
    <property type="entry name" value="Metal_Hydrolase"/>
</dbReference>
<dbReference type="PANTHER" id="PTHR35563">
    <property type="entry name" value="BARREL METAL-DEPENDENT HYDROLASE, PUTATIVE (AFU_ORTHOLOGUE AFUA_1G16240)-RELATED"/>
    <property type="match status" value="1"/>
</dbReference>
<dbReference type="PANTHER" id="PTHR35563:SF2">
    <property type="entry name" value="BARREL METAL-DEPENDENT HYDROLASE, PUTATIVE (AFU_ORTHOLOGUE AFUA_1G16240)-RELATED"/>
    <property type="match status" value="1"/>
</dbReference>
<dbReference type="Pfam" id="PF04909">
    <property type="entry name" value="Amidohydro_2"/>
    <property type="match status" value="1"/>
</dbReference>
<dbReference type="SUPFAM" id="SSF51556">
    <property type="entry name" value="Metallo-dependent hydrolases"/>
    <property type="match status" value="1"/>
</dbReference>
<reference key="1">
    <citation type="journal article" date="2001" name="Microbiology">
        <title>Comamonas testosteroni BR6020 possesses a single genetic locus for extradiol cleavage of protocatechuate.</title>
        <authorList>
            <person name="Providenti M.A."/>
            <person name="Mampel J."/>
            <person name="MacSween S."/>
            <person name="Cook A.M."/>
            <person name="Wyndham R.C."/>
        </authorList>
    </citation>
    <scope>NUCLEOTIDE SEQUENCE [GENOMIC DNA]</scope>
    <scope>FUNCTION</scope>
    <scope>DISRUPTION PHENOTYPE</scope>
    <source>
        <strain>BR6020</strain>
    </source>
</reference>
<reference key="2">
    <citation type="journal article" date="1982" name="J. Bacteriol.">
        <title>2-pyrone-4,6-dicarboxylic acid, a catabolite of gallic acids in Pseudomonas species.</title>
        <authorList>
            <person name="Kersten P.J."/>
            <person name="Dagley S."/>
            <person name="Whittaker J.W."/>
            <person name="Arciero D.M."/>
            <person name="Lipscomb J.D."/>
        </authorList>
    </citation>
    <scope>FUNCTION</scope>
    <scope>CATALYTIC ACTIVITY</scope>
    <scope>ACTIVITY REGULATION</scope>
    <scope>BIOPHYSICOCHEMICAL PROPERTIES</scope>
    <scope>INDUCTION</scope>
</reference>
<proteinExistence type="evidence at protein level"/>